<dbReference type="EMBL" id="AE006914">
    <property type="protein sequence ID" value="AAL03626.1"/>
    <property type="molecule type" value="Genomic_DNA"/>
</dbReference>
<dbReference type="PIR" id="H97835">
    <property type="entry name" value="H97835"/>
</dbReference>
<dbReference type="RefSeq" id="WP_004997606.1">
    <property type="nucleotide sequence ID" value="NC_003103.1"/>
</dbReference>
<dbReference type="SMR" id="Q92GN5"/>
<dbReference type="KEGG" id="rco:RC1088"/>
<dbReference type="HOGENOM" id="CLU_105066_1_2_5"/>
<dbReference type="Proteomes" id="UP000000816">
    <property type="component" value="Chromosome"/>
</dbReference>
<dbReference type="GO" id="GO:0005829">
    <property type="term" value="C:cytosol"/>
    <property type="evidence" value="ECO:0007669"/>
    <property type="project" value="TreeGrafter"/>
</dbReference>
<dbReference type="GO" id="GO:0003677">
    <property type="term" value="F:DNA binding"/>
    <property type="evidence" value="ECO:0007669"/>
    <property type="project" value="UniProtKB-KW"/>
</dbReference>
<dbReference type="GO" id="GO:0030527">
    <property type="term" value="F:structural constituent of chromatin"/>
    <property type="evidence" value="ECO:0007669"/>
    <property type="project" value="InterPro"/>
</dbReference>
<dbReference type="Gene3D" id="4.10.520.10">
    <property type="entry name" value="IHF-like DNA-binding proteins"/>
    <property type="match status" value="1"/>
</dbReference>
<dbReference type="InterPro" id="IPR000119">
    <property type="entry name" value="Hist_DNA-bd"/>
</dbReference>
<dbReference type="InterPro" id="IPR010992">
    <property type="entry name" value="IHF-like_DNA-bd_dom_sf"/>
</dbReference>
<dbReference type="PANTHER" id="PTHR33175">
    <property type="entry name" value="DNA-BINDING PROTEIN HU"/>
    <property type="match status" value="1"/>
</dbReference>
<dbReference type="PANTHER" id="PTHR33175:SF2">
    <property type="entry name" value="INTEGRATION HOST FACTOR SUBUNIT ALPHA"/>
    <property type="match status" value="1"/>
</dbReference>
<dbReference type="Pfam" id="PF00216">
    <property type="entry name" value="Bac_DNA_binding"/>
    <property type="match status" value="1"/>
</dbReference>
<dbReference type="SMART" id="SM00411">
    <property type="entry name" value="BHL"/>
    <property type="match status" value="1"/>
</dbReference>
<dbReference type="SUPFAM" id="SSF47729">
    <property type="entry name" value="IHF-like DNA-binding proteins"/>
    <property type="match status" value="1"/>
</dbReference>
<evidence type="ECO:0000305" key="1"/>
<sequence length="95" mass="10681">MTITKAKIAAMLSSKLGFSNNLCEEIVHTVFSNILEIAKEQKLTLKNFGSFEVKQKNPRPGINFHTKAPVIIESKKHLRFVPSSKLKALINESTR</sequence>
<name>HLP_RICCN</name>
<gene>
    <name type="ordered locus">RC1088</name>
</gene>
<reference key="1">
    <citation type="journal article" date="2001" name="Science">
        <title>Mechanisms of evolution in Rickettsia conorii and R. prowazekii.</title>
        <authorList>
            <person name="Ogata H."/>
            <person name="Audic S."/>
            <person name="Renesto-Audiffren P."/>
            <person name="Fournier P.-E."/>
            <person name="Barbe V."/>
            <person name="Samson D."/>
            <person name="Roux V."/>
            <person name="Cossart P."/>
            <person name="Weissenbach J."/>
            <person name="Claverie J.-M."/>
            <person name="Raoult D."/>
        </authorList>
    </citation>
    <scope>NUCLEOTIDE SEQUENCE [LARGE SCALE GENOMIC DNA]</scope>
    <source>
        <strain>ATCC VR-613 / Malish 7</strain>
    </source>
</reference>
<accession>Q92GN5</accession>
<protein>
    <recommendedName>
        <fullName>Histone-like DNA-binding protein</fullName>
    </recommendedName>
</protein>
<organism>
    <name type="scientific">Rickettsia conorii (strain ATCC VR-613 / Malish 7)</name>
    <dbReference type="NCBI Taxonomy" id="272944"/>
    <lineage>
        <taxon>Bacteria</taxon>
        <taxon>Pseudomonadati</taxon>
        <taxon>Pseudomonadota</taxon>
        <taxon>Alphaproteobacteria</taxon>
        <taxon>Rickettsiales</taxon>
        <taxon>Rickettsiaceae</taxon>
        <taxon>Rickettsieae</taxon>
        <taxon>Rickettsia</taxon>
        <taxon>spotted fever group</taxon>
    </lineage>
</organism>
<comment type="similarity">
    <text evidence="1">Belongs to the bacterial histone-like protein family.</text>
</comment>
<feature type="chain" id="PRO_0000280385" description="Histone-like DNA-binding protein">
    <location>
        <begin position="1"/>
        <end position="95"/>
    </location>
</feature>
<keyword id="KW-0238">DNA-binding</keyword>
<proteinExistence type="inferred from homology"/>